<feature type="chain" id="PRO_0000134538" description="Orotidine 5'-phosphate decarboxylase">
    <location>
        <begin position="1"/>
        <end position="236"/>
    </location>
</feature>
<feature type="active site" description="Proton donor" evidence="1">
    <location>
        <position position="64"/>
    </location>
</feature>
<feature type="binding site" evidence="1">
    <location>
        <position position="13"/>
    </location>
    <ligand>
        <name>substrate</name>
    </ligand>
</feature>
<feature type="binding site" evidence="1">
    <location>
        <position position="35"/>
    </location>
    <ligand>
        <name>substrate</name>
    </ligand>
</feature>
<feature type="binding site" evidence="1">
    <location>
        <begin position="62"/>
        <end position="71"/>
    </location>
    <ligand>
        <name>substrate</name>
    </ligand>
</feature>
<feature type="binding site" evidence="1">
    <location>
        <position position="123"/>
    </location>
    <ligand>
        <name>substrate</name>
    </ligand>
</feature>
<feature type="binding site" evidence="1">
    <location>
        <position position="184"/>
    </location>
    <ligand>
        <name>substrate</name>
    </ligand>
</feature>
<feature type="binding site" evidence="1">
    <location>
        <position position="193"/>
    </location>
    <ligand>
        <name>substrate</name>
    </ligand>
</feature>
<feature type="binding site" evidence="1">
    <location>
        <position position="213"/>
    </location>
    <ligand>
        <name>substrate</name>
    </ligand>
</feature>
<feature type="binding site" evidence="1">
    <location>
        <position position="214"/>
    </location>
    <ligand>
        <name>substrate</name>
    </ligand>
</feature>
<feature type="strand" evidence="2">
    <location>
        <begin position="8"/>
        <end position="11"/>
    </location>
</feature>
<feature type="helix" evidence="2">
    <location>
        <begin position="17"/>
        <end position="24"/>
    </location>
</feature>
<feature type="turn" evidence="2">
    <location>
        <begin position="29"/>
        <end position="31"/>
    </location>
</feature>
<feature type="strand" evidence="2">
    <location>
        <begin position="33"/>
        <end position="37"/>
    </location>
</feature>
<feature type="helix" evidence="2">
    <location>
        <begin position="38"/>
        <end position="54"/>
    </location>
</feature>
<feature type="strand" evidence="2">
    <location>
        <begin position="59"/>
        <end position="65"/>
    </location>
</feature>
<feature type="helix" evidence="2">
    <location>
        <begin position="69"/>
        <end position="81"/>
    </location>
</feature>
<feature type="strand" evidence="2">
    <location>
        <begin position="85"/>
        <end position="90"/>
    </location>
</feature>
<feature type="helix" evidence="2">
    <location>
        <begin position="91"/>
        <end position="93"/>
    </location>
</feature>
<feature type="helix" evidence="2">
    <location>
        <begin position="95"/>
        <end position="106"/>
    </location>
</feature>
<feature type="strand" evidence="2">
    <location>
        <begin position="115"/>
        <end position="119"/>
    </location>
</feature>
<feature type="helix" evidence="2">
    <location>
        <begin position="127"/>
        <end position="132"/>
    </location>
</feature>
<feature type="helix" evidence="2">
    <location>
        <begin position="139"/>
        <end position="153"/>
    </location>
</feature>
<feature type="strand" evidence="2">
    <location>
        <begin position="157"/>
        <end position="159"/>
    </location>
</feature>
<feature type="helix" evidence="2">
    <location>
        <begin position="162"/>
        <end position="169"/>
    </location>
</feature>
<feature type="strand" evidence="2">
    <location>
        <begin position="176"/>
        <end position="180"/>
    </location>
</feature>
<feature type="helix" evidence="2">
    <location>
        <begin position="199"/>
        <end position="205"/>
    </location>
</feature>
<feature type="strand" evidence="2">
    <location>
        <begin position="208"/>
        <end position="212"/>
    </location>
</feature>
<feature type="helix" evidence="2">
    <location>
        <begin position="214"/>
        <end position="217"/>
    </location>
</feature>
<feature type="strand" evidence="2">
    <location>
        <begin position="219"/>
        <end position="221"/>
    </location>
</feature>
<feature type="helix" evidence="2">
    <location>
        <begin position="222"/>
        <end position="232"/>
    </location>
</feature>
<accession>Q83E06</accession>
<keyword id="KW-0002">3D-structure</keyword>
<keyword id="KW-0210">Decarboxylase</keyword>
<keyword id="KW-0456">Lyase</keyword>
<keyword id="KW-0665">Pyrimidine biosynthesis</keyword>
<keyword id="KW-1185">Reference proteome</keyword>
<proteinExistence type="evidence at protein level"/>
<sequence length="236" mass="25849">MEKPDPKVIVAIDAGTVEQARAQINPLTPELCHLKIGSILFTRYGPAFVEELMQKGYRIFLDLKFYDIPQTVAGACRAVAELGVWMMNIHISGGRTMMETVVNALQSITLKEKPLLIGVTILTSLDGSDLKTLGIQEKVPDIVCRMATLAKSAGLDGVVCSAQEAALLRKQFDRNFLLVTPGIRLETDEKGDQKRVMTPRAAIQAGSDYLVIGRPITQSTDPLKALEAIDKDIKTR</sequence>
<reference key="1">
    <citation type="journal article" date="2003" name="Proc. Natl. Acad. Sci. U.S.A.">
        <title>Complete genome sequence of the Q-fever pathogen, Coxiella burnetii.</title>
        <authorList>
            <person name="Seshadri R."/>
            <person name="Paulsen I.T."/>
            <person name="Eisen J.A."/>
            <person name="Read T.D."/>
            <person name="Nelson K.E."/>
            <person name="Nelson W.C."/>
            <person name="Ward N.L."/>
            <person name="Tettelin H."/>
            <person name="Davidsen T.M."/>
            <person name="Beanan M.J."/>
            <person name="DeBoy R.T."/>
            <person name="Daugherty S.C."/>
            <person name="Brinkac L.M."/>
            <person name="Madupu R."/>
            <person name="Dodson R.J."/>
            <person name="Khouri H.M."/>
            <person name="Lee K.H."/>
            <person name="Carty H.A."/>
            <person name="Scanlan D."/>
            <person name="Heinzen R.A."/>
            <person name="Thompson H.A."/>
            <person name="Samuel J.E."/>
            <person name="Fraser C.M."/>
            <person name="Heidelberg J.F."/>
        </authorList>
    </citation>
    <scope>NUCLEOTIDE SEQUENCE [LARGE SCALE GENOMIC DNA]</scope>
    <source>
        <strain>RSA 493 / Nine Mile phase I</strain>
    </source>
</reference>
<evidence type="ECO:0000255" key="1">
    <source>
        <dbReference type="HAMAP-Rule" id="MF_01200"/>
    </source>
</evidence>
<evidence type="ECO:0007829" key="2">
    <source>
        <dbReference type="PDB" id="3TR2"/>
    </source>
</evidence>
<protein>
    <recommendedName>
        <fullName evidence="1">Orotidine 5'-phosphate decarboxylase</fullName>
        <ecNumber evidence="1">4.1.1.23</ecNumber>
    </recommendedName>
    <alternativeName>
        <fullName evidence="1">OMP decarboxylase</fullName>
        <shortName evidence="1">OMPDCase</shortName>
        <shortName evidence="1">OMPdecase</shortName>
    </alternativeName>
</protein>
<gene>
    <name evidence="1" type="primary">pyrF</name>
    <name type="ordered locus">CBU_0531</name>
</gene>
<organism>
    <name type="scientific">Coxiella burnetii (strain RSA 493 / Nine Mile phase I)</name>
    <dbReference type="NCBI Taxonomy" id="227377"/>
    <lineage>
        <taxon>Bacteria</taxon>
        <taxon>Pseudomonadati</taxon>
        <taxon>Pseudomonadota</taxon>
        <taxon>Gammaproteobacteria</taxon>
        <taxon>Legionellales</taxon>
        <taxon>Coxiellaceae</taxon>
        <taxon>Coxiella</taxon>
    </lineage>
</organism>
<name>PYRF_COXBU</name>
<dbReference type="EC" id="4.1.1.23" evidence="1"/>
<dbReference type="EMBL" id="AE016828">
    <property type="protein sequence ID" value="AAO90077.1"/>
    <property type="molecule type" value="Genomic_DNA"/>
</dbReference>
<dbReference type="RefSeq" id="NP_819563.1">
    <property type="nucleotide sequence ID" value="NC_002971.4"/>
</dbReference>
<dbReference type="RefSeq" id="WP_005771152.1">
    <property type="nucleotide sequence ID" value="NZ_CCYB01000050.1"/>
</dbReference>
<dbReference type="PDB" id="3TR2">
    <property type="method" value="X-ray"/>
    <property type="resolution" value="2.00 A"/>
    <property type="chains" value="A/B=1-236"/>
</dbReference>
<dbReference type="PDBsum" id="3TR2"/>
<dbReference type="SMR" id="Q83E06"/>
<dbReference type="STRING" id="227377.CBU_0531"/>
<dbReference type="DNASU" id="1208416"/>
<dbReference type="EnsemblBacteria" id="AAO90077">
    <property type="protein sequence ID" value="AAO90077"/>
    <property type="gene ID" value="CBU_0531"/>
</dbReference>
<dbReference type="GeneID" id="1208416"/>
<dbReference type="KEGG" id="cbu:CBU_0531"/>
<dbReference type="PATRIC" id="fig|227377.7.peg.526"/>
<dbReference type="eggNOG" id="COG0284">
    <property type="taxonomic scope" value="Bacteria"/>
</dbReference>
<dbReference type="HOGENOM" id="CLU_067069_0_0_6"/>
<dbReference type="OrthoDB" id="9806203at2"/>
<dbReference type="UniPathway" id="UPA00070">
    <property type="reaction ID" value="UER00120"/>
</dbReference>
<dbReference type="EvolutionaryTrace" id="Q83E06"/>
<dbReference type="Proteomes" id="UP000002671">
    <property type="component" value="Chromosome"/>
</dbReference>
<dbReference type="GO" id="GO:0005829">
    <property type="term" value="C:cytosol"/>
    <property type="evidence" value="ECO:0000318"/>
    <property type="project" value="GO_Central"/>
</dbReference>
<dbReference type="GO" id="GO:0004590">
    <property type="term" value="F:orotidine-5'-phosphate decarboxylase activity"/>
    <property type="evidence" value="ECO:0000318"/>
    <property type="project" value="GO_Central"/>
</dbReference>
<dbReference type="GO" id="GO:0006207">
    <property type="term" value="P:'de novo' pyrimidine nucleobase biosynthetic process"/>
    <property type="evidence" value="ECO:0000318"/>
    <property type="project" value="GO_Central"/>
</dbReference>
<dbReference type="GO" id="GO:0044205">
    <property type="term" value="P:'de novo' UMP biosynthetic process"/>
    <property type="evidence" value="ECO:0007669"/>
    <property type="project" value="UniProtKB-UniRule"/>
</dbReference>
<dbReference type="CDD" id="cd04725">
    <property type="entry name" value="OMP_decarboxylase_like"/>
    <property type="match status" value="1"/>
</dbReference>
<dbReference type="FunFam" id="3.20.20.70:FF:000015">
    <property type="entry name" value="Orotidine 5'-phosphate decarboxylase"/>
    <property type="match status" value="1"/>
</dbReference>
<dbReference type="Gene3D" id="3.20.20.70">
    <property type="entry name" value="Aldolase class I"/>
    <property type="match status" value="1"/>
</dbReference>
<dbReference type="HAMAP" id="MF_01200_B">
    <property type="entry name" value="OMPdecase_type1_B"/>
    <property type="match status" value="1"/>
</dbReference>
<dbReference type="InterPro" id="IPR013785">
    <property type="entry name" value="Aldolase_TIM"/>
</dbReference>
<dbReference type="InterPro" id="IPR014732">
    <property type="entry name" value="OMPdecase"/>
</dbReference>
<dbReference type="InterPro" id="IPR018089">
    <property type="entry name" value="OMPdecase_AS"/>
</dbReference>
<dbReference type="InterPro" id="IPR047596">
    <property type="entry name" value="OMPdecase_bac"/>
</dbReference>
<dbReference type="InterPro" id="IPR001754">
    <property type="entry name" value="OMPdeCOase_dom"/>
</dbReference>
<dbReference type="InterPro" id="IPR011060">
    <property type="entry name" value="RibuloseP-bd_barrel"/>
</dbReference>
<dbReference type="NCBIfam" id="NF001273">
    <property type="entry name" value="PRK00230.1"/>
    <property type="match status" value="1"/>
</dbReference>
<dbReference type="NCBIfam" id="TIGR01740">
    <property type="entry name" value="pyrF"/>
    <property type="match status" value="1"/>
</dbReference>
<dbReference type="PANTHER" id="PTHR32119">
    <property type="entry name" value="OROTIDINE 5'-PHOSPHATE DECARBOXYLASE"/>
    <property type="match status" value="1"/>
</dbReference>
<dbReference type="PANTHER" id="PTHR32119:SF2">
    <property type="entry name" value="OROTIDINE 5'-PHOSPHATE DECARBOXYLASE"/>
    <property type="match status" value="1"/>
</dbReference>
<dbReference type="Pfam" id="PF00215">
    <property type="entry name" value="OMPdecase"/>
    <property type="match status" value="1"/>
</dbReference>
<dbReference type="SMART" id="SM00934">
    <property type="entry name" value="OMPdecase"/>
    <property type="match status" value="1"/>
</dbReference>
<dbReference type="SUPFAM" id="SSF51366">
    <property type="entry name" value="Ribulose-phoshate binding barrel"/>
    <property type="match status" value="1"/>
</dbReference>
<dbReference type="PROSITE" id="PS00156">
    <property type="entry name" value="OMPDECASE"/>
    <property type="match status" value="1"/>
</dbReference>
<comment type="function">
    <text evidence="1">Catalyzes the decarboxylation of orotidine 5'-monophosphate (OMP) to uridine 5'-monophosphate (UMP).</text>
</comment>
<comment type="catalytic activity">
    <reaction evidence="1">
        <text>orotidine 5'-phosphate + H(+) = UMP + CO2</text>
        <dbReference type="Rhea" id="RHEA:11596"/>
        <dbReference type="ChEBI" id="CHEBI:15378"/>
        <dbReference type="ChEBI" id="CHEBI:16526"/>
        <dbReference type="ChEBI" id="CHEBI:57538"/>
        <dbReference type="ChEBI" id="CHEBI:57865"/>
        <dbReference type="EC" id="4.1.1.23"/>
    </reaction>
</comment>
<comment type="pathway">
    <text evidence="1">Pyrimidine metabolism; UMP biosynthesis via de novo pathway; UMP from orotate: step 2/2.</text>
</comment>
<comment type="subunit">
    <text evidence="1">Homodimer.</text>
</comment>
<comment type="similarity">
    <text evidence="1">Belongs to the OMP decarboxylase family. Type 1 subfamily.</text>
</comment>